<gene>
    <name evidence="1" type="primary">rpoA</name>
    <name type="ordered locus">CTA_0556</name>
</gene>
<sequence length="377" mass="41850">MSDSSHNLLYNKFELPESVKMSPVEGAVGGIDKVARFVADPLEKGMGHTLGSALRRALLIGLEAPAIVSFSMTGVLHEYMAVEGIIEDVTNIVLNLKGSLLKKYPLQDCEGGRCSQKLRATISIDASDLAAAGGQKEVTLGDLLQEGTFEAVNPEHVIFTVTRPMQLEVMLRVAFGRGYSPSERIVLEERGMNEIVLDAAFSPVVLVNYFVEDTRVGQDTDFDRLVLQVETDGRVAPKEAVAFATQILSKHFSVFEKMDEKRIVFEEAISVEKENKDDILHKLVLGINEIELSVRSTNCLSNANIETIGELVIMPEPRLLQFRNFGKKSLCEIKNKLKEMKLELGMDLSQFGVGLDNVKEKMKWYAEKIRLSKNTKG</sequence>
<keyword id="KW-0240">DNA-directed RNA polymerase</keyword>
<keyword id="KW-0548">Nucleotidyltransferase</keyword>
<keyword id="KW-0804">Transcription</keyword>
<keyword id="KW-0808">Transferase</keyword>
<reference key="1">
    <citation type="journal article" date="2005" name="Infect. Immun.">
        <title>Comparative genomic analysis of Chlamydia trachomatis oculotropic and genitotropic strains.</title>
        <authorList>
            <person name="Carlson J.H."/>
            <person name="Porcella S.F."/>
            <person name="McClarty G."/>
            <person name="Caldwell H.D."/>
        </authorList>
    </citation>
    <scope>NUCLEOTIDE SEQUENCE [LARGE SCALE GENOMIC DNA]</scope>
    <source>
        <strain>ATCC VR-571B / DSM 19440 / HAR-13</strain>
    </source>
</reference>
<evidence type="ECO:0000255" key="1">
    <source>
        <dbReference type="HAMAP-Rule" id="MF_00059"/>
    </source>
</evidence>
<proteinExistence type="inferred from homology"/>
<protein>
    <recommendedName>
        <fullName evidence="1">DNA-directed RNA polymerase subunit alpha</fullName>
        <shortName evidence="1">RNAP subunit alpha</shortName>
        <ecNumber evidence="1">2.7.7.6</ecNumber>
    </recommendedName>
    <alternativeName>
        <fullName evidence="1">RNA polymerase subunit alpha</fullName>
    </alternativeName>
    <alternativeName>
        <fullName evidence="1">Transcriptase subunit alpha</fullName>
    </alternativeName>
</protein>
<accession>Q3KLJ0</accession>
<feature type="chain" id="PRO_0000225264" description="DNA-directed RNA polymerase subunit alpha">
    <location>
        <begin position="1"/>
        <end position="377"/>
    </location>
</feature>
<feature type="region of interest" description="Alpha N-terminal domain (alpha-NTD)" evidence="1">
    <location>
        <begin position="1"/>
        <end position="259"/>
    </location>
</feature>
<feature type="region of interest" description="Alpha C-terminal domain (alpha-CTD)" evidence="1">
    <location>
        <begin position="276"/>
        <end position="377"/>
    </location>
</feature>
<comment type="function">
    <text evidence="1">DNA-dependent RNA polymerase catalyzes the transcription of DNA into RNA using the four ribonucleoside triphosphates as substrates.</text>
</comment>
<comment type="catalytic activity">
    <reaction evidence="1">
        <text>RNA(n) + a ribonucleoside 5'-triphosphate = RNA(n+1) + diphosphate</text>
        <dbReference type="Rhea" id="RHEA:21248"/>
        <dbReference type="Rhea" id="RHEA-COMP:14527"/>
        <dbReference type="Rhea" id="RHEA-COMP:17342"/>
        <dbReference type="ChEBI" id="CHEBI:33019"/>
        <dbReference type="ChEBI" id="CHEBI:61557"/>
        <dbReference type="ChEBI" id="CHEBI:140395"/>
        <dbReference type="EC" id="2.7.7.6"/>
    </reaction>
</comment>
<comment type="subunit">
    <text evidence="1">Homodimer. The RNAP catalytic core consists of 2 alpha, 1 beta, 1 beta' and 1 omega subunit. When a sigma factor is associated with the core the holoenzyme is formed, which can initiate transcription.</text>
</comment>
<comment type="domain">
    <text evidence="1">The N-terminal domain is essential for RNAP assembly and basal transcription, whereas the C-terminal domain is involved in interaction with transcriptional regulators and with upstream promoter elements.</text>
</comment>
<comment type="similarity">
    <text evidence="1">Belongs to the RNA polymerase alpha chain family.</text>
</comment>
<dbReference type="EC" id="2.7.7.6" evidence="1"/>
<dbReference type="EMBL" id="CP000051">
    <property type="protein sequence ID" value="AAX50782.1"/>
    <property type="molecule type" value="Genomic_DNA"/>
</dbReference>
<dbReference type="RefSeq" id="WP_011324758.1">
    <property type="nucleotide sequence ID" value="NC_007429.1"/>
</dbReference>
<dbReference type="SMR" id="Q3KLJ0"/>
<dbReference type="KEGG" id="cta:CTA_0556"/>
<dbReference type="HOGENOM" id="CLU_053084_0_1_0"/>
<dbReference type="Proteomes" id="UP000002532">
    <property type="component" value="Chromosome"/>
</dbReference>
<dbReference type="GO" id="GO:0005737">
    <property type="term" value="C:cytoplasm"/>
    <property type="evidence" value="ECO:0007669"/>
    <property type="project" value="UniProtKB-ARBA"/>
</dbReference>
<dbReference type="GO" id="GO:0000428">
    <property type="term" value="C:DNA-directed RNA polymerase complex"/>
    <property type="evidence" value="ECO:0007669"/>
    <property type="project" value="UniProtKB-KW"/>
</dbReference>
<dbReference type="GO" id="GO:0003677">
    <property type="term" value="F:DNA binding"/>
    <property type="evidence" value="ECO:0007669"/>
    <property type="project" value="UniProtKB-UniRule"/>
</dbReference>
<dbReference type="GO" id="GO:0003899">
    <property type="term" value="F:DNA-directed RNA polymerase activity"/>
    <property type="evidence" value="ECO:0007669"/>
    <property type="project" value="UniProtKB-UniRule"/>
</dbReference>
<dbReference type="GO" id="GO:0046983">
    <property type="term" value="F:protein dimerization activity"/>
    <property type="evidence" value="ECO:0007669"/>
    <property type="project" value="InterPro"/>
</dbReference>
<dbReference type="GO" id="GO:0006351">
    <property type="term" value="P:DNA-templated transcription"/>
    <property type="evidence" value="ECO:0007669"/>
    <property type="project" value="UniProtKB-UniRule"/>
</dbReference>
<dbReference type="CDD" id="cd06928">
    <property type="entry name" value="RNAP_alpha_NTD"/>
    <property type="match status" value="1"/>
</dbReference>
<dbReference type="FunFam" id="1.10.150.20:FF:000078">
    <property type="entry name" value="DNA-directed RNA polymerase subunit alpha"/>
    <property type="match status" value="1"/>
</dbReference>
<dbReference type="FunFam" id="2.170.120.12:FF:000014">
    <property type="entry name" value="DNA-directed RNA polymerase subunit alpha"/>
    <property type="match status" value="1"/>
</dbReference>
<dbReference type="Gene3D" id="1.10.150.20">
    <property type="entry name" value="5' to 3' exonuclease, C-terminal subdomain"/>
    <property type="match status" value="1"/>
</dbReference>
<dbReference type="Gene3D" id="2.170.120.12">
    <property type="entry name" value="DNA-directed RNA polymerase, insert domain"/>
    <property type="match status" value="1"/>
</dbReference>
<dbReference type="Gene3D" id="3.30.1360.10">
    <property type="entry name" value="RNA polymerase, RBP11-like subunit"/>
    <property type="match status" value="1"/>
</dbReference>
<dbReference type="HAMAP" id="MF_00059">
    <property type="entry name" value="RNApol_bact_RpoA"/>
    <property type="match status" value="1"/>
</dbReference>
<dbReference type="InterPro" id="IPR011262">
    <property type="entry name" value="DNA-dir_RNA_pol_insert"/>
</dbReference>
<dbReference type="InterPro" id="IPR011263">
    <property type="entry name" value="DNA-dir_RNA_pol_RpoA/D/Rpb3"/>
</dbReference>
<dbReference type="InterPro" id="IPR011773">
    <property type="entry name" value="DNA-dir_RpoA"/>
</dbReference>
<dbReference type="InterPro" id="IPR036603">
    <property type="entry name" value="RBP11-like"/>
</dbReference>
<dbReference type="InterPro" id="IPR011260">
    <property type="entry name" value="RNAP_asu_C"/>
</dbReference>
<dbReference type="InterPro" id="IPR036643">
    <property type="entry name" value="RNApol_insert_sf"/>
</dbReference>
<dbReference type="NCBIfam" id="NF003513">
    <property type="entry name" value="PRK05182.1-2"/>
    <property type="match status" value="1"/>
</dbReference>
<dbReference type="NCBIfam" id="NF003517">
    <property type="entry name" value="PRK05182.2-3"/>
    <property type="match status" value="1"/>
</dbReference>
<dbReference type="NCBIfam" id="NF003519">
    <property type="entry name" value="PRK05182.2-5"/>
    <property type="match status" value="1"/>
</dbReference>
<dbReference type="NCBIfam" id="TIGR02027">
    <property type="entry name" value="rpoA"/>
    <property type="match status" value="1"/>
</dbReference>
<dbReference type="Pfam" id="PF01000">
    <property type="entry name" value="RNA_pol_A_bac"/>
    <property type="match status" value="1"/>
</dbReference>
<dbReference type="Pfam" id="PF03118">
    <property type="entry name" value="RNA_pol_A_CTD"/>
    <property type="match status" value="1"/>
</dbReference>
<dbReference type="Pfam" id="PF01193">
    <property type="entry name" value="RNA_pol_L"/>
    <property type="match status" value="1"/>
</dbReference>
<dbReference type="SMART" id="SM00662">
    <property type="entry name" value="RPOLD"/>
    <property type="match status" value="1"/>
</dbReference>
<dbReference type="SUPFAM" id="SSF47789">
    <property type="entry name" value="C-terminal domain of RNA polymerase alpha subunit"/>
    <property type="match status" value="1"/>
</dbReference>
<dbReference type="SUPFAM" id="SSF56553">
    <property type="entry name" value="Insert subdomain of RNA polymerase alpha subunit"/>
    <property type="match status" value="1"/>
</dbReference>
<dbReference type="SUPFAM" id="SSF55257">
    <property type="entry name" value="RBP11-like subunits of RNA polymerase"/>
    <property type="match status" value="1"/>
</dbReference>
<organism>
    <name type="scientific">Chlamydia trachomatis serovar A (strain ATCC VR-571B / DSM 19440 / HAR-13)</name>
    <dbReference type="NCBI Taxonomy" id="315277"/>
    <lineage>
        <taxon>Bacteria</taxon>
        <taxon>Pseudomonadati</taxon>
        <taxon>Chlamydiota</taxon>
        <taxon>Chlamydiia</taxon>
        <taxon>Chlamydiales</taxon>
        <taxon>Chlamydiaceae</taxon>
        <taxon>Chlamydia/Chlamydophila group</taxon>
        <taxon>Chlamydia</taxon>
    </lineage>
</organism>
<name>RPOA_CHLTA</name>